<sequence length="363" mass="40395">MTTVLFVGLGLIGGSLASNIKYHNPNTNIIAYDADTSQLDKAKSIGIINEKCLNYSEAIKKADVIIYATPVAITNKYLSELIDMPTKPGVIVSDTGSTKAMIQQHECNLLKHNIHLVSGHPMAGSHKSGVLNAKKHLFENAYYILVYNEPRNEQAANTLKELLSPTLAKFIVTTAEEHDYVTSVVSHLPHIVASSLVHVSQKNGQEHHLVNKLAAGGFRDITRIASSNAQMWKDITLSNKTYILEMIRQLKSQFQDLERLIESNDSEKLLSFFAQAKSYRDALPAKQLGGLNTAYDLYVDIPDESGMISKVTYILSLHNISISNLRILEVREDIYGALKISFKNPTDRERGMQALSDFDCYIQ</sequence>
<gene>
    <name type="primary">tyrA</name>
    <name type="ordered locus">SAS1305</name>
</gene>
<reference key="1">
    <citation type="journal article" date="2004" name="Proc. Natl. Acad. Sci. U.S.A.">
        <title>Complete genomes of two clinical Staphylococcus aureus strains: evidence for the rapid evolution of virulence and drug resistance.</title>
        <authorList>
            <person name="Holden M.T.G."/>
            <person name="Feil E.J."/>
            <person name="Lindsay J.A."/>
            <person name="Peacock S.J."/>
            <person name="Day N.P.J."/>
            <person name="Enright M.C."/>
            <person name="Foster T.J."/>
            <person name="Moore C.E."/>
            <person name="Hurst L."/>
            <person name="Atkin R."/>
            <person name="Barron A."/>
            <person name="Bason N."/>
            <person name="Bentley S.D."/>
            <person name="Chillingworth C."/>
            <person name="Chillingworth T."/>
            <person name="Churcher C."/>
            <person name="Clark L."/>
            <person name="Corton C."/>
            <person name="Cronin A."/>
            <person name="Doggett J."/>
            <person name="Dowd L."/>
            <person name="Feltwell T."/>
            <person name="Hance Z."/>
            <person name="Harris B."/>
            <person name="Hauser H."/>
            <person name="Holroyd S."/>
            <person name="Jagels K."/>
            <person name="James K.D."/>
            <person name="Lennard N."/>
            <person name="Line A."/>
            <person name="Mayes R."/>
            <person name="Moule S."/>
            <person name="Mungall K."/>
            <person name="Ormond D."/>
            <person name="Quail M.A."/>
            <person name="Rabbinowitsch E."/>
            <person name="Rutherford K.M."/>
            <person name="Sanders M."/>
            <person name="Sharp S."/>
            <person name="Simmonds M."/>
            <person name="Stevens K."/>
            <person name="Whitehead S."/>
            <person name="Barrell B.G."/>
            <person name="Spratt B.G."/>
            <person name="Parkhill J."/>
        </authorList>
    </citation>
    <scope>NUCLEOTIDE SEQUENCE [LARGE SCALE GENOMIC DNA]</scope>
    <source>
        <strain>MSSA476</strain>
    </source>
</reference>
<accession>Q6G9J4</accession>
<comment type="catalytic activity">
    <reaction>
        <text>prephenate + NAD(+) = 3-(4-hydroxyphenyl)pyruvate + CO2 + NADH</text>
        <dbReference type="Rhea" id="RHEA:13869"/>
        <dbReference type="ChEBI" id="CHEBI:16526"/>
        <dbReference type="ChEBI" id="CHEBI:29934"/>
        <dbReference type="ChEBI" id="CHEBI:36242"/>
        <dbReference type="ChEBI" id="CHEBI:57540"/>
        <dbReference type="ChEBI" id="CHEBI:57945"/>
        <dbReference type="EC" id="1.3.1.12"/>
    </reaction>
</comment>
<comment type="pathway">
    <text>Amino-acid biosynthesis; L-tyrosine biosynthesis; (4-hydroxyphenyl)pyruvate from prephenate (NAD(+) route): step 1/1.</text>
</comment>
<comment type="similarity">
    <text evidence="4">Belongs to the prephenate/arogenate dehydrogenase family.</text>
</comment>
<evidence type="ECO:0000255" key="1"/>
<evidence type="ECO:0000255" key="2">
    <source>
        <dbReference type="PROSITE-ProRule" id="PRU00522"/>
    </source>
</evidence>
<evidence type="ECO:0000255" key="3">
    <source>
        <dbReference type="PROSITE-ProRule" id="PRU01007"/>
    </source>
</evidence>
<evidence type="ECO:0000305" key="4"/>
<feature type="chain" id="PRO_0000282657" description="Prephenate dehydrogenase">
    <location>
        <begin position="1"/>
        <end position="363"/>
    </location>
</feature>
<feature type="domain" description="Prephenate/arogenate dehydrogenase" evidence="2">
    <location>
        <begin position="2"/>
        <end position="291"/>
    </location>
</feature>
<feature type="domain" description="ACT" evidence="3">
    <location>
        <begin position="296"/>
        <end position="363"/>
    </location>
</feature>
<feature type="binding site" evidence="1">
    <location>
        <begin position="3"/>
        <end position="33"/>
    </location>
    <ligand>
        <name>NAD(+)</name>
        <dbReference type="ChEBI" id="CHEBI:57540"/>
    </ligand>
</feature>
<organism>
    <name type="scientific">Staphylococcus aureus (strain MSSA476)</name>
    <dbReference type="NCBI Taxonomy" id="282459"/>
    <lineage>
        <taxon>Bacteria</taxon>
        <taxon>Bacillati</taxon>
        <taxon>Bacillota</taxon>
        <taxon>Bacilli</taxon>
        <taxon>Bacillales</taxon>
        <taxon>Staphylococcaceae</taxon>
        <taxon>Staphylococcus</taxon>
    </lineage>
</organism>
<dbReference type="EC" id="1.3.1.12"/>
<dbReference type="EMBL" id="BX571857">
    <property type="protein sequence ID" value="CAG43082.1"/>
    <property type="molecule type" value="Genomic_DNA"/>
</dbReference>
<dbReference type="RefSeq" id="WP_000214266.1">
    <property type="nucleotide sequence ID" value="NC_002953.3"/>
</dbReference>
<dbReference type="SMR" id="Q6G9J4"/>
<dbReference type="KEGG" id="sas:SAS1305"/>
<dbReference type="HOGENOM" id="CLU_055968_2_1_9"/>
<dbReference type="UniPathway" id="UPA00122">
    <property type="reaction ID" value="UER00961"/>
</dbReference>
<dbReference type="GO" id="GO:0070403">
    <property type="term" value="F:NAD+ binding"/>
    <property type="evidence" value="ECO:0007669"/>
    <property type="project" value="InterPro"/>
</dbReference>
<dbReference type="GO" id="GO:0008977">
    <property type="term" value="F:prephenate dehydrogenase (NAD+) activity"/>
    <property type="evidence" value="ECO:0007669"/>
    <property type="project" value="UniProtKB-EC"/>
</dbReference>
<dbReference type="GO" id="GO:0004665">
    <property type="term" value="F:prephenate dehydrogenase (NADP+) activity"/>
    <property type="evidence" value="ECO:0007669"/>
    <property type="project" value="InterPro"/>
</dbReference>
<dbReference type="GO" id="GO:0006571">
    <property type="term" value="P:tyrosine biosynthetic process"/>
    <property type="evidence" value="ECO:0007669"/>
    <property type="project" value="UniProtKB-UniPathway"/>
</dbReference>
<dbReference type="CDD" id="cd04909">
    <property type="entry name" value="ACT_PDH-BS"/>
    <property type="match status" value="1"/>
</dbReference>
<dbReference type="FunFam" id="1.10.3660.10:FF:000003">
    <property type="entry name" value="Prephenate dehydrogenase"/>
    <property type="match status" value="1"/>
</dbReference>
<dbReference type="FunFam" id="3.40.50.720:FF:000208">
    <property type="entry name" value="Prephenate dehydrogenase"/>
    <property type="match status" value="1"/>
</dbReference>
<dbReference type="Gene3D" id="1.10.3660.10">
    <property type="entry name" value="6-phosphogluconate dehydrogenase C-terminal like domain"/>
    <property type="match status" value="1"/>
</dbReference>
<dbReference type="Gene3D" id="3.40.50.720">
    <property type="entry name" value="NAD(P)-binding Rossmann-like Domain"/>
    <property type="match status" value="1"/>
</dbReference>
<dbReference type="InterPro" id="IPR008927">
    <property type="entry name" value="6-PGluconate_DH-like_C_sf"/>
</dbReference>
<dbReference type="InterPro" id="IPR045865">
    <property type="entry name" value="ACT-like_dom_sf"/>
</dbReference>
<dbReference type="InterPro" id="IPR002912">
    <property type="entry name" value="ACT_dom"/>
</dbReference>
<dbReference type="InterPro" id="IPR036291">
    <property type="entry name" value="NAD(P)-bd_dom_sf"/>
</dbReference>
<dbReference type="InterPro" id="IPR046825">
    <property type="entry name" value="PDH_C"/>
</dbReference>
<dbReference type="InterPro" id="IPR046826">
    <property type="entry name" value="PDH_N"/>
</dbReference>
<dbReference type="InterPro" id="IPR050812">
    <property type="entry name" value="Preph/Arog_dehydrog"/>
</dbReference>
<dbReference type="InterPro" id="IPR003099">
    <property type="entry name" value="Prephen_DH"/>
</dbReference>
<dbReference type="NCBIfam" id="NF005106">
    <property type="entry name" value="PRK06545.1-4"/>
    <property type="match status" value="1"/>
</dbReference>
<dbReference type="NCBIfam" id="NF005107">
    <property type="entry name" value="PRK06545.1-5"/>
    <property type="match status" value="1"/>
</dbReference>
<dbReference type="PANTHER" id="PTHR21363">
    <property type="entry name" value="PREPHENATE DEHYDROGENASE"/>
    <property type="match status" value="1"/>
</dbReference>
<dbReference type="PANTHER" id="PTHR21363:SF0">
    <property type="entry name" value="PREPHENATE DEHYDROGENASE [NADP(+)]"/>
    <property type="match status" value="1"/>
</dbReference>
<dbReference type="Pfam" id="PF20463">
    <property type="entry name" value="PDH_C"/>
    <property type="match status" value="1"/>
</dbReference>
<dbReference type="Pfam" id="PF02153">
    <property type="entry name" value="PDH_N"/>
    <property type="match status" value="1"/>
</dbReference>
<dbReference type="SUPFAM" id="SSF48179">
    <property type="entry name" value="6-phosphogluconate dehydrogenase C-terminal domain-like"/>
    <property type="match status" value="1"/>
</dbReference>
<dbReference type="SUPFAM" id="SSF55021">
    <property type="entry name" value="ACT-like"/>
    <property type="match status" value="1"/>
</dbReference>
<dbReference type="SUPFAM" id="SSF51735">
    <property type="entry name" value="NAD(P)-binding Rossmann-fold domains"/>
    <property type="match status" value="1"/>
</dbReference>
<dbReference type="PROSITE" id="PS51671">
    <property type="entry name" value="ACT"/>
    <property type="match status" value="1"/>
</dbReference>
<dbReference type="PROSITE" id="PS51176">
    <property type="entry name" value="PDH_ADH"/>
    <property type="match status" value="1"/>
</dbReference>
<proteinExistence type="inferred from homology"/>
<keyword id="KW-0028">Amino-acid biosynthesis</keyword>
<keyword id="KW-0057">Aromatic amino acid biosynthesis</keyword>
<keyword id="KW-0520">NAD</keyword>
<keyword id="KW-0560">Oxidoreductase</keyword>
<keyword id="KW-0827">Tyrosine biosynthesis</keyword>
<protein>
    <recommendedName>
        <fullName>Prephenate dehydrogenase</fullName>
        <shortName>PDH</shortName>
        <ecNumber>1.3.1.12</ecNumber>
    </recommendedName>
</protein>
<name>TYRA_STAAS</name>